<organism>
    <name type="scientific">Mycobacterium tuberculosis (strain ATCC 25618 / H37Rv)</name>
    <dbReference type="NCBI Taxonomy" id="83332"/>
    <lineage>
        <taxon>Bacteria</taxon>
        <taxon>Bacillati</taxon>
        <taxon>Actinomycetota</taxon>
        <taxon>Actinomycetes</taxon>
        <taxon>Mycobacteriales</taxon>
        <taxon>Mycobacteriaceae</taxon>
        <taxon>Mycobacterium</taxon>
        <taxon>Mycobacterium tuberculosis complex</taxon>
    </lineage>
</organism>
<gene>
    <name type="ordered locus">Rv0479c</name>
    <name type="ORF">MTCY20G9.05c</name>
</gene>
<sequence>MTNPQGPPNDPSPWARPGDQGPLARPPASSEASTGRLRPGEPAGHIQEPVSPPTQPEQQPQTEHLAASHAHTRRSGRQAAHQAWDPTGLLAAQEEEPAAVKTKRRARRDPLTVFLVLIIVFSLVLAGLIGGELYARHVANSKVAQAVACVVKDQATASFGVAPLLLWQVATRHFTNISVETAGNQIRDAKGMQIKLTIQNVRLKNTPNSRGTIGALDATITWSSEGIKESVQNAIPILGAFVTSSVVTHPADGTVELKGLLNNITAKPIVAGKGLELQIINFNTLGFSLPKETVQSTLNEFTSSLTKNYPLGIHADSVQVTSTGVVSRFSTRDAAIPTGIQNPCFSHI</sequence>
<feature type="chain" id="PRO_0000103681" description="Uncharacterized protein Rv0479c">
    <location>
        <begin position="1"/>
        <end position="348"/>
    </location>
</feature>
<feature type="transmembrane region" description="Helical" evidence="1">
    <location>
        <begin position="111"/>
        <end position="131"/>
    </location>
</feature>
<feature type="transmembrane region" description="Helical" evidence="1">
    <location>
        <begin position="235"/>
        <end position="255"/>
    </location>
</feature>
<feature type="region of interest" description="Disordered" evidence="2">
    <location>
        <begin position="1"/>
        <end position="83"/>
    </location>
</feature>
<feature type="compositionally biased region" description="Pro residues" evidence="2">
    <location>
        <begin position="1"/>
        <end position="11"/>
    </location>
</feature>
<keyword id="KW-1003">Cell membrane</keyword>
<keyword id="KW-0472">Membrane</keyword>
<keyword id="KW-1185">Reference proteome</keyword>
<keyword id="KW-0812">Transmembrane</keyword>
<keyword id="KW-1133">Transmembrane helix</keyword>
<protein>
    <recommendedName>
        <fullName>Uncharacterized protein Rv0479c</fullName>
    </recommendedName>
</protein>
<reference key="1">
    <citation type="journal article" date="1998" name="Nature">
        <title>Deciphering the biology of Mycobacterium tuberculosis from the complete genome sequence.</title>
        <authorList>
            <person name="Cole S.T."/>
            <person name="Brosch R."/>
            <person name="Parkhill J."/>
            <person name="Garnier T."/>
            <person name="Churcher C.M."/>
            <person name="Harris D.E."/>
            <person name="Gordon S.V."/>
            <person name="Eiglmeier K."/>
            <person name="Gas S."/>
            <person name="Barry C.E. III"/>
            <person name="Tekaia F."/>
            <person name="Badcock K."/>
            <person name="Basham D."/>
            <person name="Brown D."/>
            <person name="Chillingworth T."/>
            <person name="Connor R."/>
            <person name="Davies R.M."/>
            <person name="Devlin K."/>
            <person name="Feltwell T."/>
            <person name="Gentles S."/>
            <person name="Hamlin N."/>
            <person name="Holroyd S."/>
            <person name="Hornsby T."/>
            <person name="Jagels K."/>
            <person name="Krogh A."/>
            <person name="McLean J."/>
            <person name="Moule S."/>
            <person name="Murphy L.D."/>
            <person name="Oliver S."/>
            <person name="Osborne J."/>
            <person name="Quail M.A."/>
            <person name="Rajandream M.A."/>
            <person name="Rogers J."/>
            <person name="Rutter S."/>
            <person name="Seeger K."/>
            <person name="Skelton S."/>
            <person name="Squares S."/>
            <person name="Squares R."/>
            <person name="Sulston J.E."/>
            <person name="Taylor K."/>
            <person name="Whitehead S."/>
            <person name="Barrell B.G."/>
        </authorList>
    </citation>
    <scope>NUCLEOTIDE SEQUENCE [LARGE SCALE GENOMIC DNA]</scope>
    <source>
        <strain>ATCC 25618 / H37Rv</strain>
    </source>
</reference>
<reference key="2">
    <citation type="journal article" date="2008" name="BMC Syst. Biol.">
        <title>targetTB: a target identification pipeline for Mycobacterium tuberculosis through an interactome, reactome and genome-scale structural analysis.</title>
        <authorList>
            <person name="Raman K."/>
            <person name="Yeturu K."/>
            <person name="Chandra N."/>
        </authorList>
    </citation>
    <scope>IDENTIFICATION AS A DRUG TARGET [LARGE SCALE ANALYSIS]</scope>
</reference>
<reference key="3">
    <citation type="journal article" date="2011" name="Mol. Cell. Proteomics">
        <title>Proteogenomic analysis of Mycobacterium tuberculosis by high resolution mass spectrometry.</title>
        <authorList>
            <person name="Kelkar D.S."/>
            <person name="Kumar D."/>
            <person name="Kumar P."/>
            <person name="Balakrishnan L."/>
            <person name="Muthusamy B."/>
            <person name="Yadav A.K."/>
            <person name="Shrivastava P."/>
            <person name="Marimuthu A."/>
            <person name="Anand S."/>
            <person name="Sundaram H."/>
            <person name="Kingsbury R."/>
            <person name="Harsha H.C."/>
            <person name="Nair B."/>
            <person name="Prasad T.S."/>
            <person name="Chauhan D.S."/>
            <person name="Katoch K."/>
            <person name="Katoch V.M."/>
            <person name="Kumar P."/>
            <person name="Chaerkady R."/>
            <person name="Ramachandran S."/>
            <person name="Dash D."/>
            <person name="Pandey A."/>
        </authorList>
    </citation>
    <scope>IDENTIFICATION BY MASS SPECTROMETRY [LARGE SCALE ANALYSIS]</scope>
    <source>
        <strain>ATCC 25618 / H37Rv</strain>
    </source>
</reference>
<dbReference type="EMBL" id="AL123456">
    <property type="protein sequence ID" value="CCP43213.1"/>
    <property type="molecule type" value="Genomic_DNA"/>
</dbReference>
<dbReference type="PIR" id="B70743">
    <property type="entry name" value="B70743"/>
</dbReference>
<dbReference type="RefSeq" id="NP_214993.1">
    <property type="nucleotide sequence ID" value="NC_000962.3"/>
</dbReference>
<dbReference type="RefSeq" id="WP_003898475.1">
    <property type="nucleotide sequence ID" value="NZ_NVQJ01000002.1"/>
</dbReference>
<dbReference type="SMR" id="P9WKV7"/>
<dbReference type="STRING" id="83332.Rv0479c"/>
<dbReference type="PaxDb" id="83332-Rv0479c"/>
<dbReference type="DNASU" id="885535"/>
<dbReference type="GeneID" id="885535"/>
<dbReference type="KEGG" id="mtu:Rv0479c"/>
<dbReference type="KEGG" id="mtv:RVBD_0479c"/>
<dbReference type="TubercuList" id="Rv0479c"/>
<dbReference type="eggNOG" id="ENOG5032ZJ9">
    <property type="taxonomic scope" value="Bacteria"/>
</dbReference>
<dbReference type="InParanoid" id="P9WKV7"/>
<dbReference type="OrthoDB" id="4201904at2"/>
<dbReference type="Proteomes" id="UP000001584">
    <property type="component" value="Chromosome"/>
</dbReference>
<dbReference type="GO" id="GO:0005886">
    <property type="term" value="C:plasma membrane"/>
    <property type="evidence" value="ECO:0007005"/>
    <property type="project" value="MTBBASE"/>
</dbReference>
<dbReference type="InterPro" id="IPR021373">
    <property type="entry name" value="DUF2993"/>
</dbReference>
<dbReference type="Pfam" id="PF11209">
    <property type="entry name" value="LmeA"/>
    <property type="match status" value="1"/>
</dbReference>
<accession>P9WKV7</accession>
<accession>L0T6L4</accession>
<accession>P64699</accession>
<accession>Q11145</accession>
<proteinExistence type="evidence at protein level"/>
<comment type="subcellular location">
    <subcellularLocation>
        <location evidence="3">Cell membrane</location>
        <topology evidence="3">Multi-pass membrane protein</topology>
    </subcellularLocation>
</comment>
<comment type="miscellaneous">
    <text>Was identified as a high-confidence drug target.</text>
</comment>
<evidence type="ECO:0000255" key="1"/>
<evidence type="ECO:0000256" key="2">
    <source>
        <dbReference type="SAM" id="MobiDB-lite"/>
    </source>
</evidence>
<evidence type="ECO:0000305" key="3"/>
<name>Y479_MYCTU</name>